<evidence type="ECO:0000255" key="1">
    <source>
        <dbReference type="HAMAP-Rule" id="MF_00801"/>
    </source>
</evidence>
<protein>
    <recommendedName>
        <fullName evidence="1">Endonuclease V</fullName>
        <ecNumber evidence="1">3.1.21.7</ecNumber>
    </recommendedName>
    <alternativeName>
        <fullName evidence="1">Deoxyinosine 3'endonuclease</fullName>
    </alternativeName>
    <alternativeName>
        <fullName evidence="1">Deoxyribonuclease V</fullName>
        <shortName evidence="1">DNase V</shortName>
    </alternativeName>
</protein>
<feature type="chain" id="PRO_0000159696" description="Endonuclease V">
    <location>
        <begin position="1"/>
        <end position="196"/>
    </location>
</feature>
<feature type="binding site" evidence="1">
    <location>
        <position position="37"/>
    </location>
    <ligand>
        <name>Mg(2+)</name>
        <dbReference type="ChEBI" id="CHEBI:18420"/>
    </ligand>
</feature>
<feature type="binding site" evidence="1">
    <location>
        <position position="98"/>
    </location>
    <ligand>
        <name>Mg(2+)</name>
        <dbReference type="ChEBI" id="CHEBI:18420"/>
    </ligand>
</feature>
<feature type="site" description="Interaction with target DNA" evidence="1">
    <location>
        <position position="70"/>
    </location>
</feature>
<dbReference type="EC" id="3.1.21.7" evidence="1"/>
<dbReference type="EMBL" id="BA000023">
    <property type="protein sequence ID" value="BAK54338.1"/>
    <property type="molecule type" value="Genomic_DNA"/>
</dbReference>
<dbReference type="RefSeq" id="WP_010978559.1">
    <property type="nucleotide sequence ID" value="NC_003106.2"/>
</dbReference>
<dbReference type="SMR" id="Q974T1"/>
<dbReference type="STRING" id="273063.STK_05810"/>
<dbReference type="GeneID" id="1458526"/>
<dbReference type="KEGG" id="sto:STK_05810"/>
<dbReference type="PATRIC" id="fig|273063.9.peg.661"/>
<dbReference type="eggNOG" id="arCOG00929">
    <property type="taxonomic scope" value="Archaea"/>
</dbReference>
<dbReference type="OrthoDB" id="7885at2157"/>
<dbReference type="Proteomes" id="UP000001015">
    <property type="component" value="Chromosome"/>
</dbReference>
<dbReference type="GO" id="GO:0005737">
    <property type="term" value="C:cytoplasm"/>
    <property type="evidence" value="ECO:0007669"/>
    <property type="project" value="UniProtKB-SubCell"/>
</dbReference>
<dbReference type="GO" id="GO:0043737">
    <property type="term" value="F:deoxyribonuclease V activity"/>
    <property type="evidence" value="ECO:0007669"/>
    <property type="project" value="UniProtKB-UniRule"/>
</dbReference>
<dbReference type="GO" id="GO:0000287">
    <property type="term" value="F:magnesium ion binding"/>
    <property type="evidence" value="ECO:0007669"/>
    <property type="project" value="UniProtKB-UniRule"/>
</dbReference>
<dbReference type="GO" id="GO:0016891">
    <property type="term" value="F:RNA endonuclease activity, producing 5'-phosphomonoesters"/>
    <property type="evidence" value="ECO:0007669"/>
    <property type="project" value="TreeGrafter"/>
</dbReference>
<dbReference type="GO" id="GO:0003727">
    <property type="term" value="F:single-stranded RNA binding"/>
    <property type="evidence" value="ECO:0007669"/>
    <property type="project" value="TreeGrafter"/>
</dbReference>
<dbReference type="GO" id="GO:0006281">
    <property type="term" value="P:DNA repair"/>
    <property type="evidence" value="ECO:0007669"/>
    <property type="project" value="UniProtKB-UniRule"/>
</dbReference>
<dbReference type="CDD" id="cd06559">
    <property type="entry name" value="Endonuclease_V"/>
    <property type="match status" value="1"/>
</dbReference>
<dbReference type="Gene3D" id="3.30.2170.10">
    <property type="entry name" value="archaeoglobus fulgidus dsm 4304 superfamily"/>
    <property type="match status" value="1"/>
</dbReference>
<dbReference type="HAMAP" id="MF_00801">
    <property type="entry name" value="Endonuclease_5"/>
    <property type="match status" value="1"/>
</dbReference>
<dbReference type="InterPro" id="IPR007581">
    <property type="entry name" value="Endonuclease-V"/>
</dbReference>
<dbReference type="PANTHER" id="PTHR28511">
    <property type="entry name" value="ENDONUCLEASE V"/>
    <property type="match status" value="1"/>
</dbReference>
<dbReference type="PANTHER" id="PTHR28511:SF1">
    <property type="entry name" value="ENDONUCLEASE V"/>
    <property type="match status" value="1"/>
</dbReference>
<dbReference type="Pfam" id="PF04493">
    <property type="entry name" value="Endonuclease_5"/>
    <property type="match status" value="1"/>
</dbReference>
<sequence>MEDYIIDFLIKFQKLIAKNVKIQHLGIENVKRICGTDIAYKGNIGYAVAVKEEEGKIEYNLVKGDVFFPYIPTFLFVREAPLMIKAVEKYECDLILVDGHGLTHPRKSGIATVIGVLLDKPTIGVAKSRLTGDLVVENNITYVILHGEKLGVKVGKYFFSIGNKTDLSDVIDLAKKGYPKVLKLADKLSKDLKKKE</sequence>
<name>NFI_SULTO</name>
<organism>
    <name type="scientific">Sulfurisphaera tokodaii (strain DSM 16993 / JCM 10545 / NBRC 100140 / 7)</name>
    <name type="common">Sulfolobus tokodaii</name>
    <dbReference type="NCBI Taxonomy" id="273063"/>
    <lineage>
        <taxon>Archaea</taxon>
        <taxon>Thermoproteota</taxon>
        <taxon>Thermoprotei</taxon>
        <taxon>Sulfolobales</taxon>
        <taxon>Sulfolobaceae</taxon>
        <taxon>Sulfurisphaera</taxon>
    </lineage>
</organism>
<comment type="function">
    <text evidence="1">DNA repair enzyme involved in the repair of deaminated bases. Selectively cleaves double-stranded DNA at the second phosphodiester bond 3' to a deoxyinosine leaving behind the intact lesion on the nicked DNA.</text>
</comment>
<comment type="catalytic activity">
    <reaction evidence="1">
        <text>Endonucleolytic cleavage at apurinic or apyrimidinic sites to products with a 5'-phosphate.</text>
        <dbReference type="EC" id="3.1.21.7"/>
    </reaction>
</comment>
<comment type="cofactor">
    <cofactor evidence="1">
        <name>Mg(2+)</name>
        <dbReference type="ChEBI" id="CHEBI:18420"/>
    </cofactor>
</comment>
<comment type="subcellular location">
    <subcellularLocation>
        <location evidence="1">Cytoplasm</location>
    </subcellularLocation>
</comment>
<comment type="similarity">
    <text evidence="1">Belongs to the endonuclease V family.</text>
</comment>
<gene>
    <name evidence="1" type="primary">nfi</name>
    <name type="ordered locus">STK_05810</name>
</gene>
<keyword id="KW-0963">Cytoplasm</keyword>
<keyword id="KW-0227">DNA damage</keyword>
<keyword id="KW-0234">DNA repair</keyword>
<keyword id="KW-0255">Endonuclease</keyword>
<keyword id="KW-0378">Hydrolase</keyword>
<keyword id="KW-0460">Magnesium</keyword>
<keyword id="KW-0479">Metal-binding</keyword>
<keyword id="KW-0540">Nuclease</keyword>
<keyword id="KW-1185">Reference proteome</keyword>
<reference key="1">
    <citation type="journal article" date="2001" name="DNA Res.">
        <title>Complete genome sequence of an aerobic thermoacidophilic Crenarchaeon, Sulfolobus tokodaii strain7.</title>
        <authorList>
            <person name="Kawarabayasi Y."/>
            <person name="Hino Y."/>
            <person name="Horikawa H."/>
            <person name="Jin-no K."/>
            <person name="Takahashi M."/>
            <person name="Sekine M."/>
            <person name="Baba S."/>
            <person name="Ankai A."/>
            <person name="Kosugi H."/>
            <person name="Hosoyama A."/>
            <person name="Fukui S."/>
            <person name="Nagai Y."/>
            <person name="Nishijima K."/>
            <person name="Otsuka R."/>
            <person name="Nakazawa H."/>
            <person name="Takamiya M."/>
            <person name="Kato Y."/>
            <person name="Yoshizawa T."/>
            <person name="Tanaka T."/>
            <person name="Kudoh Y."/>
            <person name="Yamazaki J."/>
            <person name="Kushida N."/>
            <person name="Oguchi A."/>
            <person name="Aoki K."/>
            <person name="Masuda S."/>
            <person name="Yanagii M."/>
            <person name="Nishimura M."/>
            <person name="Yamagishi A."/>
            <person name="Oshima T."/>
            <person name="Kikuchi H."/>
        </authorList>
    </citation>
    <scope>NUCLEOTIDE SEQUENCE [LARGE SCALE GENOMIC DNA]</scope>
    <source>
        <strain>DSM 16993 / JCM 10545 / NBRC 100140 / 7</strain>
    </source>
</reference>
<proteinExistence type="inferred from homology"/>
<accession>Q974T1</accession>
<accession>F9VN41</accession>